<dbReference type="EC" id="1.11.1.12" evidence="20"/>
<dbReference type="EC" id="1.11.1.9" evidence="6"/>
<dbReference type="EMBL" id="D87896">
    <property type="protein sequence ID" value="BAA22780.1"/>
    <property type="molecule type" value="mRNA"/>
</dbReference>
<dbReference type="EMBL" id="AJ012104">
    <property type="protein sequence ID" value="CAB42657.2"/>
    <property type="molecule type" value="Genomic_DNA"/>
</dbReference>
<dbReference type="EMBL" id="AF045768">
    <property type="protein sequence ID" value="AAC15832.1"/>
    <property type="molecule type" value="mRNA"/>
</dbReference>
<dbReference type="EMBL" id="AF045769">
    <property type="protein sequence ID" value="AAC15833.1"/>
    <property type="molecule type" value="mRNA"/>
</dbReference>
<dbReference type="EMBL" id="AF274027">
    <property type="protein sequence ID" value="AAK74112.1"/>
    <property type="molecule type" value="mRNA"/>
</dbReference>
<dbReference type="EMBL" id="AF044056">
    <property type="protein sequence ID" value="AAC14560.1"/>
    <property type="molecule type" value="Genomic_DNA"/>
</dbReference>
<dbReference type="EMBL" id="AB030643">
    <property type="protein sequence ID" value="BAC06507.1"/>
    <property type="molecule type" value="Genomic_DNA"/>
</dbReference>
<dbReference type="EMBL" id="AB030643">
    <property type="protein sequence ID" value="BAC06508.1"/>
    <property type="molecule type" value="Genomic_DNA"/>
</dbReference>
<dbReference type="EMBL" id="AB030643">
    <property type="protein sequence ID" value="BAC06509.1"/>
    <property type="molecule type" value="Genomic_DNA"/>
</dbReference>
<dbReference type="EMBL" id="AB030728">
    <property type="protein sequence ID" value="BAC06511.1"/>
    <property type="molecule type" value="Genomic_DNA"/>
</dbReference>
<dbReference type="EMBL" id="AK006441">
    <property type="protein sequence ID" value="BAC55251.1"/>
    <property type="molecule type" value="mRNA"/>
</dbReference>
<dbReference type="CCDS" id="CCDS24007.1">
    <molecule id="O70325-3"/>
</dbReference>
<dbReference type="CCDS" id="CCDS35973.1">
    <molecule id="O70325-1"/>
</dbReference>
<dbReference type="RefSeq" id="NP_001032830.2">
    <molecule id="O70325-3"/>
    <property type="nucleotide sequence ID" value="NM_001037741.4"/>
</dbReference>
<dbReference type="RefSeq" id="NP_001354924.1">
    <molecule id="O70325-2"/>
    <property type="nucleotide sequence ID" value="NM_001367995.1"/>
</dbReference>
<dbReference type="RefSeq" id="NP_032188.3">
    <molecule id="O70325-1"/>
    <property type="nucleotide sequence ID" value="NM_008162.3"/>
</dbReference>
<dbReference type="PDB" id="5L71">
    <property type="method" value="X-ray"/>
    <property type="resolution" value="1.80 A"/>
    <property type="chains" value="A=29-197"/>
</dbReference>
<dbReference type="PDBsum" id="5L71"/>
<dbReference type="SMR" id="O70325"/>
<dbReference type="BioGRID" id="551619">
    <property type="interactions" value="4"/>
</dbReference>
<dbReference type="FunCoup" id="O70325">
    <property type="interactions" value="2159"/>
</dbReference>
<dbReference type="IntAct" id="O70325">
    <property type="interactions" value="1"/>
</dbReference>
<dbReference type="STRING" id="10090.ENSMUSP00000094863"/>
<dbReference type="ChEMBL" id="CHEMBL4523148"/>
<dbReference type="PeroxiBase" id="3714">
    <property type="entry name" value="MmGPx04-A"/>
</dbReference>
<dbReference type="PeroxiBase" id="3865">
    <property type="entry name" value="MmGPx04-B"/>
</dbReference>
<dbReference type="PeroxiBase" id="3867">
    <property type="entry name" value="MmGPx04-C"/>
</dbReference>
<dbReference type="GlyGen" id="O70325">
    <property type="glycosylation" value="2 sites, 1 N-linked glycan (1 site), 1 O-linked glycan (1 site)"/>
</dbReference>
<dbReference type="iPTMnet" id="O70325"/>
<dbReference type="PhosphoSitePlus" id="O70325"/>
<dbReference type="SwissPalm" id="O70325"/>
<dbReference type="jPOST" id="O70325"/>
<dbReference type="PaxDb" id="10090-ENSMUSP00000094863"/>
<dbReference type="PeptideAtlas" id="O70325"/>
<dbReference type="ProteomicsDB" id="271319">
    <molecule id="O70325-1"/>
</dbReference>
<dbReference type="ProteomicsDB" id="271320">
    <molecule id="O70325-2"/>
</dbReference>
<dbReference type="ProteomicsDB" id="271321">
    <molecule id="O70325-3"/>
</dbReference>
<dbReference type="Pumba" id="O70325"/>
<dbReference type="ABCD" id="O70325">
    <property type="antibodies" value="1 sequenced antibody"/>
</dbReference>
<dbReference type="Antibodypedia" id="3263">
    <property type="antibodies" value="373 antibodies from 40 providers"/>
</dbReference>
<dbReference type="DNASU" id="625249"/>
<dbReference type="Ensembl" id="ENSMUST00000097227.11">
    <molecule id="O70325-3"/>
    <property type="protein sequence ID" value="ENSMUSP00000094863.5"/>
    <property type="gene ID" value="ENSMUSG00000075706.12"/>
</dbReference>
<dbReference type="Ensembl" id="ENSMUST00000105372.9">
    <molecule id="O70325-1"/>
    <property type="protein sequence ID" value="ENSMUSP00000101011.3"/>
    <property type="gene ID" value="ENSMUSG00000075706.12"/>
</dbReference>
<dbReference type="GeneID" id="625249"/>
<dbReference type="KEGG" id="mmu:625249"/>
<dbReference type="UCSC" id="uc007gbk.2">
    <molecule id="O70325-1"/>
    <property type="organism name" value="mouse"/>
</dbReference>
<dbReference type="AGR" id="MGI:104767"/>
<dbReference type="CTD" id="2879"/>
<dbReference type="MGI" id="MGI:104767">
    <property type="gene designation" value="Gpx4"/>
</dbReference>
<dbReference type="VEuPathDB" id="HostDB:ENSMUSG00000075706"/>
<dbReference type="eggNOG" id="KOG1651">
    <property type="taxonomic scope" value="Eukaryota"/>
</dbReference>
<dbReference type="GeneTree" id="ENSGT00940000161913"/>
<dbReference type="InParanoid" id="O70325"/>
<dbReference type="OMA" id="TFPMTEK"/>
<dbReference type="OrthoDB" id="446890at2759"/>
<dbReference type="BRENDA" id="1.11.1.12">
    <property type="organism ID" value="3474"/>
</dbReference>
<dbReference type="Reactome" id="R-MMU-2142712">
    <property type="pathway name" value="Synthesis of 12-eicosatetraenoic acid derivatives"/>
</dbReference>
<dbReference type="Reactome" id="R-MMU-2142770">
    <property type="pathway name" value="Synthesis of 15-eicosatetraenoic acid derivatives"/>
</dbReference>
<dbReference type="Reactome" id="R-MMU-9018676">
    <property type="pathway name" value="Biosynthesis of D-series resolvins"/>
</dbReference>
<dbReference type="Reactome" id="R-MMU-9018896">
    <property type="pathway name" value="Biosynthesis of E-series 18(S)-resolvins"/>
</dbReference>
<dbReference type="Reactome" id="R-MMU-9020265">
    <property type="pathway name" value="Biosynthesis of aspirin-triggered D-series resolvins"/>
</dbReference>
<dbReference type="Reactome" id="R-MMU-9023661">
    <property type="pathway name" value="Biosynthesis of E-series 18(R)-resolvins"/>
</dbReference>
<dbReference type="BioGRID-ORCS" id="625249">
    <property type="hits" value="18 hits in 81 CRISPR screens"/>
</dbReference>
<dbReference type="CD-CODE" id="CE726F99">
    <property type="entry name" value="Postsynaptic density"/>
</dbReference>
<dbReference type="ChiTaRS" id="Gpx4">
    <property type="organism name" value="mouse"/>
</dbReference>
<dbReference type="PRO" id="PR:O70325"/>
<dbReference type="Proteomes" id="UP000000589">
    <property type="component" value="Chromosome 10"/>
</dbReference>
<dbReference type="Bgee" id="ENSMUSG00000075706">
    <property type="expression patterns" value="Expressed in spermatid and 131 other cell types or tissues"/>
</dbReference>
<dbReference type="ExpressionAtlas" id="O70325">
    <property type="expression patterns" value="baseline and differential"/>
</dbReference>
<dbReference type="GO" id="GO:0005829">
    <property type="term" value="C:cytosol"/>
    <property type="evidence" value="ECO:0000314"/>
    <property type="project" value="MGI"/>
</dbReference>
<dbReference type="GO" id="GO:0005743">
    <property type="term" value="C:mitochondrial inner membrane"/>
    <property type="evidence" value="ECO:0007005"/>
    <property type="project" value="MGI"/>
</dbReference>
<dbReference type="GO" id="GO:0005739">
    <property type="term" value="C:mitochondrion"/>
    <property type="evidence" value="ECO:0000314"/>
    <property type="project" value="MGI"/>
</dbReference>
<dbReference type="GO" id="GO:0005635">
    <property type="term" value="C:nuclear envelope"/>
    <property type="evidence" value="ECO:0000314"/>
    <property type="project" value="MGI"/>
</dbReference>
<dbReference type="GO" id="GO:0005634">
    <property type="term" value="C:nucleus"/>
    <property type="evidence" value="ECO:0000314"/>
    <property type="project" value="MGI"/>
</dbReference>
<dbReference type="GO" id="GO:0032991">
    <property type="term" value="C:protein-containing complex"/>
    <property type="evidence" value="ECO:0007669"/>
    <property type="project" value="Ensembl"/>
</dbReference>
<dbReference type="GO" id="GO:0004602">
    <property type="term" value="F:glutathione peroxidase activity"/>
    <property type="evidence" value="ECO:0000314"/>
    <property type="project" value="MGI"/>
</dbReference>
<dbReference type="GO" id="GO:0042802">
    <property type="term" value="F:identical protein binding"/>
    <property type="evidence" value="ECO:0007669"/>
    <property type="project" value="Ensembl"/>
</dbReference>
<dbReference type="GO" id="GO:0047066">
    <property type="term" value="F:phospholipid-hydroperoxide glutathione peroxidase activity"/>
    <property type="evidence" value="ECO:0000314"/>
    <property type="project" value="UniProtKB"/>
</dbReference>
<dbReference type="GO" id="GO:0008430">
    <property type="term" value="F:selenium binding"/>
    <property type="evidence" value="ECO:0007669"/>
    <property type="project" value="Ensembl"/>
</dbReference>
<dbReference type="GO" id="GO:0006915">
    <property type="term" value="P:apoptotic process"/>
    <property type="evidence" value="ECO:0000315"/>
    <property type="project" value="MGI"/>
</dbReference>
<dbReference type="GO" id="GO:0019369">
    <property type="term" value="P:arachidonate metabolic process"/>
    <property type="evidence" value="ECO:0000250"/>
    <property type="project" value="UniProtKB"/>
</dbReference>
<dbReference type="GO" id="GO:0021549">
    <property type="term" value="P:cerebellum development"/>
    <property type="evidence" value="ECO:0000315"/>
    <property type="project" value="MGI"/>
</dbReference>
<dbReference type="GO" id="GO:0006325">
    <property type="term" value="P:chromatin organization"/>
    <property type="evidence" value="ECO:0000314"/>
    <property type="project" value="MGI"/>
</dbReference>
<dbReference type="GO" id="GO:0016358">
    <property type="term" value="P:dendrite development"/>
    <property type="evidence" value="ECO:0000315"/>
    <property type="project" value="MGI"/>
</dbReference>
<dbReference type="GO" id="GO:0019372">
    <property type="term" value="P:lipoxygenase pathway"/>
    <property type="evidence" value="ECO:0000250"/>
    <property type="project" value="UniProtKB"/>
</dbReference>
<dbReference type="GO" id="GO:0035264">
    <property type="term" value="P:multicellular organism growth"/>
    <property type="evidence" value="ECO:0000315"/>
    <property type="project" value="MGI"/>
</dbReference>
<dbReference type="GO" id="GO:0110076">
    <property type="term" value="P:negative regulation of ferroptosis"/>
    <property type="evidence" value="ECO:0000315"/>
    <property type="project" value="UniProtKB"/>
</dbReference>
<dbReference type="GO" id="GO:0051258">
    <property type="term" value="P:protein polymerization"/>
    <property type="evidence" value="ECO:0007669"/>
    <property type="project" value="Ensembl"/>
</dbReference>
<dbReference type="GO" id="GO:0032355">
    <property type="term" value="P:response to estradiol"/>
    <property type="evidence" value="ECO:0007669"/>
    <property type="project" value="Ensembl"/>
</dbReference>
<dbReference type="GO" id="GO:0032496">
    <property type="term" value="P:response to lipopolysaccharide"/>
    <property type="evidence" value="ECO:0000314"/>
    <property type="project" value="MGI"/>
</dbReference>
<dbReference type="GO" id="GO:0006979">
    <property type="term" value="P:response to oxidative stress"/>
    <property type="evidence" value="ECO:0000315"/>
    <property type="project" value="UniProtKB"/>
</dbReference>
<dbReference type="GO" id="GO:0007283">
    <property type="term" value="P:spermatogenesis"/>
    <property type="evidence" value="ECO:0000314"/>
    <property type="project" value="MGI"/>
</dbReference>
<dbReference type="CDD" id="cd00340">
    <property type="entry name" value="GSH_Peroxidase"/>
    <property type="match status" value="1"/>
</dbReference>
<dbReference type="FunFam" id="3.40.30.10:FF:000111">
    <property type="entry name" value="Glutathione peroxidase"/>
    <property type="match status" value="1"/>
</dbReference>
<dbReference type="Gene3D" id="3.40.30.10">
    <property type="entry name" value="Glutaredoxin"/>
    <property type="match status" value="1"/>
</dbReference>
<dbReference type="InterPro" id="IPR000889">
    <property type="entry name" value="Glutathione_peroxidase"/>
</dbReference>
<dbReference type="InterPro" id="IPR029759">
    <property type="entry name" value="GPX_AS"/>
</dbReference>
<dbReference type="InterPro" id="IPR029760">
    <property type="entry name" value="GPX_CS"/>
</dbReference>
<dbReference type="InterPro" id="IPR036249">
    <property type="entry name" value="Thioredoxin-like_sf"/>
</dbReference>
<dbReference type="PANTHER" id="PTHR11592">
    <property type="entry name" value="GLUTATHIONE PEROXIDASE"/>
    <property type="match status" value="1"/>
</dbReference>
<dbReference type="PANTHER" id="PTHR11592:SF134">
    <property type="entry name" value="PHOSPHOLIPID HYDROPEROXIDE GLUTATHIONE PEROXIDASE"/>
    <property type="match status" value="1"/>
</dbReference>
<dbReference type="Pfam" id="PF00255">
    <property type="entry name" value="GSHPx"/>
    <property type="match status" value="1"/>
</dbReference>
<dbReference type="PIRSF" id="PIRSF000303">
    <property type="entry name" value="Glutathion_perox"/>
    <property type="match status" value="1"/>
</dbReference>
<dbReference type="PRINTS" id="PR01011">
    <property type="entry name" value="GLUTPROXDASE"/>
</dbReference>
<dbReference type="SUPFAM" id="SSF52833">
    <property type="entry name" value="Thioredoxin-like"/>
    <property type="match status" value="1"/>
</dbReference>
<dbReference type="PROSITE" id="PS00460">
    <property type="entry name" value="GLUTATHIONE_PEROXID_1"/>
    <property type="match status" value="1"/>
</dbReference>
<dbReference type="PROSITE" id="PS00763">
    <property type="entry name" value="GLUTATHIONE_PEROXID_2"/>
    <property type="match status" value="1"/>
</dbReference>
<dbReference type="PROSITE" id="PS51355">
    <property type="entry name" value="GLUTATHIONE_PEROXID_3"/>
    <property type="match status" value="1"/>
</dbReference>
<feature type="transit peptide" description="Mitochondrion" evidence="4">
    <location>
        <begin position="1"/>
        <end status="unknown"/>
    </location>
</feature>
<feature type="chain" id="PRO_0000013069" description="Phospholipid hydroperoxide glutathione peroxidase GPX4">
    <location>
        <begin status="unknown"/>
        <end position="197"/>
    </location>
</feature>
<feature type="active site" evidence="20">
    <location>
        <position position="73"/>
    </location>
</feature>
<feature type="non-standard amino acid" description="Selenocysteine" evidence="20">
    <location>
        <position position="73"/>
    </location>
</feature>
<feature type="modified residue" description="Phosphoserine" evidence="3">
    <location>
        <position position="40"/>
    </location>
</feature>
<feature type="splice variant" id="VSP_059349" description="In isoform Nuclear.">
    <original>MSWGRLSRLLKPALLCGALAAPGLAGTM</original>
    <variation>MGRAAARKRGRCRQRGGSPRGRRRRGPGRQSPRKRPGPRRRKARARRRRRARPRRMEPIPEPFNPGPLLQEPPQYCNSSEFLGL</variation>
    <location>
        <begin position="1"/>
        <end position="28"/>
    </location>
</feature>
<feature type="splice variant" id="VSP_018743" description="In isoform Cytoplasmic." evidence="25">
    <location>
        <begin position="1"/>
        <end position="27"/>
    </location>
</feature>
<feature type="mutagenesis site" description="Mice develop normally and were born at the expected Mendelian ratio. Homozygous mice however lose body weight by P14-P16 and are susceptible to fatal epileptic seizures. Cells are extremely sensitive to peroxide-induced cell death because the enzyme is inactivated: The enzyme undergoes overoxidation and irreversible inactivation in the presence of exceeding concentrations of its substrates. Unlike the wild-type enzyme, which can form a selenylamide in the absence of reducing equivalents, thereby preventing its irreversible overoxidation, the mutant fails to form such an intermediate during its catalytic cycle." evidence="20">
    <original>U</original>
    <variation>C</variation>
    <location>
        <position position="73"/>
    </location>
</feature>
<feature type="mutagenesis site" description="Early embryonic lethality in homozygous mice. Male subfertility in heterozygous mice due to impaired spermatogenesis." evidence="19">
    <original>U</original>
    <variation>S</variation>
    <location>
        <position position="73"/>
    </location>
</feature>
<feature type="sequence conflict" description="In Ref. 1; BAA22780." evidence="25" ref="1">
    <original>R</original>
    <variation>A</variation>
    <location>
        <position position="39"/>
    </location>
</feature>
<feature type="sequence conflict" description="In Ref. 4; AAK74112." evidence="25" ref="4">
    <original>V</original>
    <variation>E</variation>
    <location>
        <position position="176"/>
    </location>
</feature>
<feature type="sequence conflict" description="In Ref. 4; AAK74112." evidence="25" ref="4">
    <original>K</original>
    <variation>R</variation>
    <location>
        <position position="191"/>
    </location>
</feature>
<feature type="helix" evidence="30">
    <location>
        <begin position="35"/>
        <end position="37"/>
    </location>
</feature>
<feature type="helix" evidence="30">
    <location>
        <begin position="41"/>
        <end position="43"/>
    </location>
</feature>
<feature type="strand" evidence="30">
    <location>
        <begin position="45"/>
        <end position="48"/>
    </location>
</feature>
<feature type="strand" evidence="30">
    <location>
        <begin position="53"/>
        <end position="55"/>
    </location>
</feature>
<feature type="helix" evidence="30">
    <location>
        <begin position="56"/>
        <end position="59"/>
    </location>
</feature>
<feature type="strand" evidence="30">
    <location>
        <begin position="62"/>
        <end position="69"/>
    </location>
</feature>
<feature type="strand" evidence="30">
    <location>
        <begin position="71"/>
        <end position="73"/>
    </location>
</feature>
<feature type="helix" evidence="30">
    <location>
        <begin position="76"/>
        <end position="90"/>
    </location>
</feature>
<feature type="turn" evidence="30">
    <location>
        <begin position="91"/>
        <end position="94"/>
    </location>
</feature>
<feature type="strand" evidence="30">
    <location>
        <begin position="95"/>
        <end position="101"/>
    </location>
</feature>
<feature type="turn" evidence="30">
    <location>
        <begin position="104"/>
        <end position="107"/>
    </location>
</feature>
<feature type="helix" evidence="30">
    <location>
        <begin position="113"/>
        <end position="122"/>
    </location>
</feature>
<feature type="strand" evidence="30">
    <location>
        <begin position="127"/>
        <end position="130"/>
    </location>
</feature>
<feature type="helix" evidence="30">
    <location>
        <begin position="142"/>
        <end position="148"/>
    </location>
</feature>
<feature type="helix" evidence="30">
    <location>
        <begin position="151"/>
        <end position="153"/>
    </location>
</feature>
<feature type="strand" evidence="30">
    <location>
        <begin position="156"/>
        <end position="160"/>
    </location>
</feature>
<feature type="strand" evidence="30">
    <location>
        <begin position="167"/>
        <end position="170"/>
    </location>
</feature>
<feature type="strand" evidence="30">
    <location>
        <begin position="176"/>
        <end position="180"/>
    </location>
</feature>
<feature type="helix" evidence="30">
    <location>
        <begin position="187"/>
        <end position="190"/>
    </location>
</feature>
<feature type="helix" evidence="30">
    <location>
        <begin position="191"/>
        <end position="195"/>
    </location>
</feature>
<keyword id="KW-0002">3D-structure</keyword>
<keyword id="KW-0024">Alternative initiation</keyword>
<keyword id="KW-0025">Alternative splicing</keyword>
<keyword id="KW-0963">Cytoplasm</keyword>
<keyword id="KW-0217">Developmental protein</keyword>
<keyword id="KW-0443">Lipid metabolism</keyword>
<keyword id="KW-0496">Mitochondrion</keyword>
<keyword id="KW-0539">Nucleus</keyword>
<keyword id="KW-0560">Oxidoreductase</keyword>
<keyword id="KW-0575">Peroxidase</keyword>
<keyword id="KW-0597">Phosphoprotein</keyword>
<keyword id="KW-1185">Reference proteome</keyword>
<keyword id="KW-0712">Selenocysteine</keyword>
<keyword id="KW-0809">Transit peptide</keyword>
<accession>O70325</accession>
<accession>O35560</accession>
<accession>Q8K4U8</accession>
<accession>Q91XR9</accession>
<accession>Q9JK35</accession>
<protein>
    <recommendedName>
        <fullName evidence="21 24">Phospholipid hydroperoxide glutathione peroxidase GPX4</fullName>
        <shortName evidence="21 24">PHGPx</shortName>
        <ecNumber evidence="20">1.11.1.12</ecNumber>
    </recommendedName>
    <alternativeName>
        <fullName evidence="22">Glutathione peroxidase 4</fullName>
        <shortName evidence="22">GPx-4</shortName>
        <shortName evidence="22">GSHPx-4</shortName>
        <ecNumber evidence="6">1.11.1.9</ecNumber>
    </alternativeName>
</protein>
<reference key="1">
    <citation type="journal article" date="1997" name="Gene">
        <title>Cloning and sequencing of the cDNA encoding a phospholipid hydroperoxide glutathione peroxidase.</title>
        <authorList>
            <person name="Nam S.-Y."/>
            <person name="Nakamuta N."/>
            <person name="Kurohmaru M."/>
            <person name="Hayashi Y."/>
        </authorList>
    </citation>
    <scope>NUCLEOTIDE SEQUENCE [MRNA]</scope>
    <source>
        <strain>CD-1</strain>
        <tissue>Testis</tissue>
    </source>
</reference>
<reference key="2">
    <citation type="journal article" date="1999" name="FEBS Lett.">
        <title>Cloning of the mouse phospholipid hydroperoxide glutathione peroxidase gene.</title>
        <authorList>
            <person name="Borchert A."/>
            <person name="Schnurr K."/>
            <person name="Thiele B.J."/>
            <person name="Kuehn H."/>
        </authorList>
    </citation>
    <scope>NUCLEOTIDE SEQUENCE [GENOMIC DNA]</scope>
    <source>
        <strain>C57BL/6N</strain>
    </source>
</reference>
<reference key="3">
    <citation type="journal article" date="1999" name="Mamm. Genome">
        <title>Murine phospholipid hydroperoxide glutathione peroxidase: cDNA sequence, tissue expression, and mapping.</title>
        <authorList>
            <person name="Knopp E.A."/>
            <person name="Arndt T.L."/>
            <person name="Eng K.L."/>
            <person name="Caldwell M."/>
            <person name="LeBoeuf R.C."/>
            <person name="Deeb S.S."/>
            <person name="O'Brien K.D."/>
        </authorList>
    </citation>
    <scope>NUCLEOTIDE SEQUENCE [GENOMIC DNA / MRNA]</scope>
    <source>
        <strain>BALB/cJ</strain>
        <strain>C57BL/6J</strain>
        <tissue>Myocardium</tissue>
        <tissue>Testis</tissue>
    </source>
</reference>
<reference evidence="25" key="4">
    <citation type="journal article" date="2001" name="FASEB J.">
        <title>Identification of a specific sperm nuclei selenoenzyme necessary for protamine thiol cross-linking during sperm maturation.</title>
        <authorList>
            <person name="Pfeifer H."/>
            <person name="Conrad M."/>
            <person name="Roethlein D."/>
            <person name="Kyriakopoulos A."/>
            <person name="Brielmeier M."/>
            <person name="Bornkamm G.W."/>
            <person name="Behne D."/>
        </authorList>
    </citation>
    <scope>NUCLEOTIDE SEQUENCE [MRNA] (ISOFORM NUCLEAR)</scope>
    <scope>SUBCELLULAR LOCATION (ISOFORM NUCLEAR)</scope>
    <scope>TISSUE SPECIFICITY</scope>
    <source>
        <tissue>Testis</tissue>
    </source>
</reference>
<reference key="5">
    <citation type="journal article" date="2003" name="Biochem. Biophys. Res. Commun.">
        <title>Early embryonic lethality caused by targeted disruption of the mouse PHGPx gene.</title>
        <authorList>
            <person name="Imai H."/>
            <person name="Hirao F."/>
            <person name="Sakamoto T."/>
            <person name="Sekine K."/>
            <person name="Mizukura Y."/>
            <person name="Saito M."/>
            <person name="Kitamoto T."/>
            <person name="Hayasaka M."/>
            <person name="Hanaoka K."/>
            <person name="Nakagawa Y."/>
        </authorList>
    </citation>
    <scope>NUCLEOTIDE SEQUENCE [GENOMIC DNA]</scope>
    <scope>DISRUPTION PHENOTYPE</scope>
    <source>
        <strain>129/SvJ</strain>
        <tissue>Liver</tissue>
    </source>
</reference>
<reference key="6">
    <citation type="journal article" date="2005" name="Science">
        <title>The transcriptional landscape of the mammalian genome.</title>
        <authorList>
            <person name="Carninci P."/>
            <person name="Kasukawa T."/>
            <person name="Katayama S."/>
            <person name="Gough J."/>
            <person name="Frith M.C."/>
            <person name="Maeda N."/>
            <person name="Oyama R."/>
            <person name="Ravasi T."/>
            <person name="Lenhard B."/>
            <person name="Wells C."/>
            <person name="Kodzius R."/>
            <person name="Shimokawa K."/>
            <person name="Bajic V.B."/>
            <person name="Brenner S.E."/>
            <person name="Batalov S."/>
            <person name="Forrest A.R."/>
            <person name="Zavolan M."/>
            <person name="Davis M.J."/>
            <person name="Wilming L.G."/>
            <person name="Aidinis V."/>
            <person name="Allen J.E."/>
            <person name="Ambesi-Impiombato A."/>
            <person name="Apweiler R."/>
            <person name="Aturaliya R.N."/>
            <person name="Bailey T.L."/>
            <person name="Bansal M."/>
            <person name="Baxter L."/>
            <person name="Beisel K.W."/>
            <person name="Bersano T."/>
            <person name="Bono H."/>
            <person name="Chalk A.M."/>
            <person name="Chiu K.P."/>
            <person name="Choudhary V."/>
            <person name="Christoffels A."/>
            <person name="Clutterbuck D.R."/>
            <person name="Crowe M.L."/>
            <person name="Dalla E."/>
            <person name="Dalrymple B.P."/>
            <person name="de Bono B."/>
            <person name="Della Gatta G."/>
            <person name="di Bernardo D."/>
            <person name="Down T."/>
            <person name="Engstrom P."/>
            <person name="Fagiolini M."/>
            <person name="Faulkner G."/>
            <person name="Fletcher C.F."/>
            <person name="Fukushima T."/>
            <person name="Furuno M."/>
            <person name="Futaki S."/>
            <person name="Gariboldi M."/>
            <person name="Georgii-Hemming P."/>
            <person name="Gingeras T.R."/>
            <person name="Gojobori T."/>
            <person name="Green R.E."/>
            <person name="Gustincich S."/>
            <person name="Harbers M."/>
            <person name="Hayashi Y."/>
            <person name="Hensch T.K."/>
            <person name="Hirokawa N."/>
            <person name="Hill D."/>
            <person name="Huminiecki L."/>
            <person name="Iacono M."/>
            <person name="Ikeo K."/>
            <person name="Iwama A."/>
            <person name="Ishikawa T."/>
            <person name="Jakt M."/>
            <person name="Kanapin A."/>
            <person name="Katoh M."/>
            <person name="Kawasawa Y."/>
            <person name="Kelso J."/>
            <person name="Kitamura H."/>
            <person name="Kitano H."/>
            <person name="Kollias G."/>
            <person name="Krishnan S.P."/>
            <person name="Kruger A."/>
            <person name="Kummerfeld S.K."/>
            <person name="Kurochkin I.V."/>
            <person name="Lareau L.F."/>
            <person name="Lazarevic D."/>
            <person name="Lipovich L."/>
            <person name="Liu J."/>
            <person name="Liuni S."/>
            <person name="McWilliam S."/>
            <person name="Madan Babu M."/>
            <person name="Madera M."/>
            <person name="Marchionni L."/>
            <person name="Matsuda H."/>
            <person name="Matsuzawa S."/>
            <person name="Miki H."/>
            <person name="Mignone F."/>
            <person name="Miyake S."/>
            <person name="Morris K."/>
            <person name="Mottagui-Tabar S."/>
            <person name="Mulder N."/>
            <person name="Nakano N."/>
            <person name="Nakauchi H."/>
            <person name="Ng P."/>
            <person name="Nilsson R."/>
            <person name="Nishiguchi S."/>
            <person name="Nishikawa S."/>
            <person name="Nori F."/>
            <person name="Ohara O."/>
            <person name="Okazaki Y."/>
            <person name="Orlando V."/>
            <person name="Pang K.C."/>
            <person name="Pavan W.J."/>
            <person name="Pavesi G."/>
            <person name="Pesole G."/>
            <person name="Petrovsky N."/>
            <person name="Piazza S."/>
            <person name="Reed J."/>
            <person name="Reid J.F."/>
            <person name="Ring B.Z."/>
            <person name="Ringwald M."/>
            <person name="Rost B."/>
            <person name="Ruan Y."/>
            <person name="Salzberg S.L."/>
            <person name="Sandelin A."/>
            <person name="Schneider C."/>
            <person name="Schoenbach C."/>
            <person name="Sekiguchi K."/>
            <person name="Semple C.A."/>
            <person name="Seno S."/>
            <person name="Sessa L."/>
            <person name="Sheng Y."/>
            <person name="Shibata Y."/>
            <person name="Shimada H."/>
            <person name="Shimada K."/>
            <person name="Silva D."/>
            <person name="Sinclair B."/>
            <person name="Sperling S."/>
            <person name="Stupka E."/>
            <person name="Sugiura K."/>
            <person name="Sultana R."/>
            <person name="Takenaka Y."/>
            <person name="Taki K."/>
            <person name="Tammoja K."/>
            <person name="Tan S.L."/>
            <person name="Tang S."/>
            <person name="Taylor M.S."/>
            <person name="Tegner J."/>
            <person name="Teichmann S.A."/>
            <person name="Ueda H.R."/>
            <person name="van Nimwegen E."/>
            <person name="Verardo R."/>
            <person name="Wei C.L."/>
            <person name="Yagi K."/>
            <person name="Yamanishi H."/>
            <person name="Zabarovsky E."/>
            <person name="Zhu S."/>
            <person name="Zimmer A."/>
            <person name="Hide W."/>
            <person name="Bult C."/>
            <person name="Grimmond S.M."/>
            <person name="Teasdale R.D."/>
            <person name="Liu E.T."/>
            <person name="Brusic V."/>
            <person name="Quackenbush J."/>
            <person name="Wahlestedt C."/>
            <person name="Mattick J.S."/>
            <person name="Hume D.A."/>
            <person name="Kai C."/>
            <person name="Sasaki D."/>
            <person name="Tomaru Y."/>
            <person name="Fukuda S."/>
            <person name="Kanamori-Katayama M."/>
            <person name="Suzuki M."/>
            <person name="Aoki J."/>
            <person name="Arakawa T."/>
            <person name="Iida J."/>
            <person name="Imamura K."/>
            <person name="Itoh M."/>
            <person name="Kato T."/>
            <person name="Kawaji H."/>
            <person name="Kawagashira N."/>
            <person name="Kawashima T."/>
            <person name="Kojima M."/>
            <person name="Kondo S."/>
            <person name="Konno H."/>
            <person name="Nakano K."/>
            <person name="Ninomiya N."/>
            <person name="Nishio T."/>
            <person name="Okada M."/>
            <person name="Plessy C."/>
            <person name="Shibata K."/>
            <person name="Shiraki T."/>
            <person name="Suzuki S."/>
            <person name="Tagami M."/>
            <person name="Waki K."/>
            <person name="Watahiki A."/>
            <person name="Okamura-Oho Y."/>
            <person name="Suzuki H."/>
            <person name="Kawai J."/>
            <person name="Hayashizaki Y."/>
        </authorList>
    </citation>
    <scope>NUCLEOTIDE SEQUENCE [LARGE SCALE MRNA]</scope>
    <source>
        <strain>C57BL/6J</strain>
        <tissue>Testis</tissue>
    </source>
</reference>
<reference key="7">
    <citation type="journal article" date="2003" name="Free Radic. Biol. Med.">
        <title>The selenoprotein GPX4 is essential for mouse development and protects from radiation and oxidative damage insults.</title>
        <authorList>
            <person name="Yant L.J."/>
            <person name="Ran Q."/>
            <person name="Rao L."/>
            <person name="Van Remmen H."/>
            <person name="Shibatani T."/>
            <person name="Belter J.G."/>
            <person name="Motta L."/>
            <person name="Richardson A."/>
            <person name="Prolla T.A."/>
        </authorList>
    </citation>
    <scope>FUNCTION</scope>
    <scope>SUBCELLULAR LOCATION</scope>
    <scope>TISSUE SPECIFICITY</scope>
    <scope>CATALYTIC ACTIVITY</scope>
</reference>
<reference key="8">
    <citation type="journal article" date="2006" name="J. Biol. Chem.">
        <title>The role of phospholipid hydroperoxide glutathione peroxidase isoforms in murine embryogenesis.</title>
        <authorList>
            <person name="Borchert A."/>
            <person name="Wang C.C."/>
            <person name="Ufer C."/>
            <person name="Schiebel H."/>
            <person name="Savaskan N.E."/>
            <person name="Kuhn H."/>
        </authorList>
    </citation>
    <scope>TISSUE SPECIFICITY</scope>
</reference>
<reference key="9">
    <citation type="journal article" date="2007" name="J. Mol. Histol.">
        <title>Tissue expression and cellular localization of phospholipid hydroperoxide glutathione peroxidase (PHGPx) mRNA in male mice.</title>
        <authorList>
            <person name="Baek I.J."/>
            <person name="Seo D.S."/>
            <person name="Yon J.M."/>
            <person name="Lee S.R."/>
            <person name="Jin Y."/>
            <person name="Nahm S.S."/>
            <person name="Jeong J.H."/>
            <person name="Choo Y.K."/>
            <person name="Kang J.K."/>
            <person name="Lee B.J."/>
            <person name="Yun Y.W."/>
            <person name="Nam S.Y."/>
        </authorList>
    </citation>
    <scope>TISSUE SPECIFICITY</scope>
</reference>
<reference key="10">
    <citation type="journal article" date="2008" name="Cell Metab.">
        <title>Glutathione peroxidase 4 senses and translates oxidative stress into 12/15-lipoxygenase dependent- and AIF-mediated cell death.</title>
        <authorList>
            <person name="Seiler A."/>
            <person name="Schneider M."/>
            <person name="Foerster H."/>
            <person name="Roth S."/>
            <person name="Wirth E.K."/>
            <person name="Culmsee C."/>
            <person name="Plesnila N."/>
            <person name="Kremmer E."/>
            <person name="Raadmark O."/>
            <person name="Wurst W."/>
            <person name="Bornkamm G.W."/>
            <person name="Schweizer U."/>
            <person name="Conrad M."/>
        </authorList>
    </citation>
    <scope>FUNCTION</scope>
    <scope>DISRUPTION PHENOTYPE</scope>
</reference>
<reference key="11">
    <citation type="journal article" date="2009" name="FASEB J.">
        <title>Mitochondrial glutathione peroxidase 4 disruption causes male infertility.</title>
        <authorList>
            <person name="Schneider M."/>
            <person name="Forster H."/>
            <person name="Boersma A."/>
            <person name="Seiler A."/>
            <person name="Wehnes H."/>
            <person name="Sinowatz F."/>
            <person name="Neumueller C."/>
            <person name="Deutsch M.J."/>
            <person name="Walch A."/>
            <person name="Hrabe de Angelis M."/>
            <person name="Wurst W."/>
            <person name="Ursini F."/>
            <person name="Roveri A."/>
            <person name="Maleszewski M."/>
            <person name="Maiorino M."/>
            <person name="Conrad M."/>
        </authorList>
    </citation>
    <scope>FUNCTION</scope>
    <scope>TISSUE SPECIFICITY</scope>
    <scope>DISRUPTION PHENOTYPE</scope>
</reference>
<reference key="12">
    <citation type="journal article" date="2009" name="J. Biol. Chem.">
        <title>Depletion of selenoprotein GPx4 in spermatocytes causes male infertility in mice.</title>
        <authorList>
            <person name="Imai H."/>
            <person name="Hakkaku N."/>
            <person name="Iwamoto R."/>
            <person name="Suzuki J."/>
            <person name="Suzuki T."/>
            <person name="Tajima Y."/>
            <person name="Konishi K."/>
            <person name="Minami S."/>
            <person name="Ichinose S."/>
            <person name="Ishizaka K."/>
            <person name="Shioda S."/>
            <person name="Arata S."/>
            <person name="Nishimura M."/>
            <person name="Naito S."/>
            <person name="Nakagawa Y."/>
        </authorList>
    </citation>
    <scope>FUNCTION</scope>
    <scope>DISRUPTION PHENOTYPE</scope>
</reference>
<reference key="13">
    <citation type="journal article" date="2010" name="Cell">
        <title>A tissue-specific atlas of mouse protein phosphorylation and expression.</title>
        <authorList>
            <person name="Huttlin E.L."/>
            <person name="Jedrychowski M.P."/>
            <person name="Elias J.E."/>
            <person name="Goswami T."/>
            <person name="Rad R."/>
            <person name="Beausoleil S.A."/>
            <person name="Villen J."/>
            <person name="Haas W."/>
            <person name="Sowa M.E."/>
            <person name="Gygi S.P."/>
        </authorList>
    </citation>
    <scope>IDENTIFICATION BY MASS SPECTROMETRY [LARGE SCALE ANALYSIS]</scope>
    <source>
        <tissue>Brain</tissue>
        <tissue>Brown adipose tissue</tissue>
        <tissue>Heart</tissue>
        <tissue>Kidney</tissue>
        <tissue>Liver</tissue>
        <tissue>Lung</tissue>
        <tissue>Pancreas</tissue>
        <tissue>Spleen</tissue>
        <tissue>Testis</tissue>
    </source>
</reference>
<reference key="14">
    <citation type="journal article" date="2010" name="FASEB J.">
        <title>Neuronal selenoprotein expression is required for interneuron development and prevents seizures and neurodegeneration.</title>
        <authorList>
            <person name="Wirth E.K."/>
            <person name="Conrad M."/>
            <person name="Winterer J."/>
            <person name="Wozny C."/>
            <person name="Carlson B.A."/>
            <person name="Roth S."/>
            <person name="Schmitz D."/>
            <person name="Bornkamm G.W."/>
            <person name="Coppola V."/>
            <person name="Tessarollo L."/>
            <person name="Schomburg L."/>
            <person name="Koehrle J."/>
            <person name="Hatfield D.L."/>
            <person name="Schweizer U."/>
        </authorList>
    </citation>
    <scope>DISRUPTION PHENOTYPE</scope>
</reference>
<reference key="15">
    <citation type="journal article" date="2014" name="Biol. Trace Elem. Res.">
        <title>Cerebellar hypoplasia in mice lacking selenoprotein biosynthesis in neurons.</title>
        <authorList>
            <person name="Wirth E.K."/>
            <person name="Bharathi B.S."/>
            <person name="Hatfield D."/>
            <person name="Conrad M."/>
            <person name="Brielmeier M."/>
            <person name="Schweizer U."/>
        </authorList>
    </citation>
    <scope>DISRUPTION PHENOTYPE</scope>
</reference>
<reference key="16">
    <citation type="journal article" date="2014" name="Cell">
        <title>Regulation of ferroptotic cancer cell death by GPX4.</title>
        <authorList>
            <person name="Yang W.S."/>
            <person name="SriRamaratnam R."/>
            <person name="Welsch M.E."/>
            <person name="Shimada K."/>
            <person name="Skouta R."/>
            <person name="Viswanathan V.S."/>
            <person name="Cheah J.H."/>
            <person name="Clemons P.A."/>
            <person name="Shamji A.F."/>
            <person name="Clish C.B."/>
            <person name="Brown L.M."/>
            <person name="Girotti A.W."/>
            <person name="Cornish V.W."/>
            <person name="Schreiber S.L."/>
            <person name="Stockwell B.R."/>
        </authorList>
    </citation>
    <scope>FUNCTION</scope>
</reference>
<reference key="17">
    <citation type="journal article" date="2012" name="J. Biol. Chem.">
        <title>Glutathione peroxidase 4 is required for maturation of photoreceptor cells.</title>
        <authorList>
            <person name="Ueta T."/>
            <person name="Inoue T."/>
            <person name="Furukawa T."/>
            <person name="Tamaki Y."/>
            <person name="Nakagawa Y."/>
            <person name="Imai H."/>
            <person name="Yanagi Y."/>
        </authorList>
    </citation>
    <scope>FUNCTION</scope>
    <scope>SUBCELLULAR LOCATION</scope>
    <scope>TISSUE SPECIFICITY</scope>
    <scope>DISRUPTION PHENOTYPE</scope>
</reference>
<reference key="18">
    <citation type="journal article" date="2014" name="Nat. Cell Biol.">
        <title>Inactivation of the ferroptosis regulator Gpx4 triggers acute renal failure in mice.</title>
        <authorList>
            <person name="Friedmann Angeli J.P."/>
            <person name="Schneider M."/>
            <person name="Proneth B."/>
            <person name="Tyurina Y.Y."/>
            <person name="Tyurin V.A."/>
            <person name="Hammond V.J."/>
            <person name="Herbach N."/>
            <person name="Aichler M."/>
            <person name="Walch A."/>
            <person name="Eggenhofer E."/>
            <person name="Basavarajappa D."/>
            <person name="Raadmark O."/>
            <person name="Kobayashi S."/>
            <person name="Seibt T."/>
            <person name="Beck H."/>
            <person name="Neff F."/>
            <person name="Esposito I."/>
            <person name="Wanke R."/>
            <person name="Foerster H."/>
            <person name="Yefremova O."/>
            <person name="Heinrichmeyer M."/>
            <person name="Bornkamm G.W."/>
            <person name="Geissler E.K."/>
            <person name="Thomas S.B."/>
            <person name="Stockwell B.R."/>
            <person name="O'Donnell V.B."/>
            <person name="Kagan V.E."/>
            <person name="Schick J.A."/>
            <person name="Conrad M."/>
        </authorList>
    </citation>
    <scope>FUNCTION</scope>
    <scope>DISRUPTION PHENOTYPE</scope>
</reference>
<reference key="19">
    <citation type="journal article" date="2015" name="J. Biol. Chem.">
        <title>Expression of a catalytically inactive mutant form of glutathione peroxidase 4 (Gpx4) confers a dominant-negative effect in male fertility.</title>
        <authorList>
            <person name="Ingold I."/>
            <person name="Aichler M."/>
            <person name="Yefremova E."/>
            <person name="Roveri A."/>
            <person name="Buday K."/>
            <person name="Doll S."/>
            <person name="Tasdemir A."/>
            <person name="Hoffard N."/>
            <person name="Wurst W."/>
            <person name="Walch A."/>
            <person name="Ursini F."/>
            <person name="Friedmann Angeli J.P."/>
            <person name="Conrad M."/>
        </authorList>
    </citation>
    <scope>FUNCTION</scope>
    <scope>MUTAGENESIS OF SEC-73</scope>
    <scope>CATALYTIC ACTIVITY</scope>
</reference>
<reference key="20">
    <citation type="journal article" date="2015" name="J. Exp. Med.">
        <title>T cell lipid peroxidation induces ferroptosis and prevents immunity to infection.</title>
        <authorList>
            <person name="Matsushita M."/>
            <person name="Freigang S."/>
            <person name="Schneider C."/>
            <person name="Conrad M."/>
            <person name="Bornkamm G.W."/>
            <person name="Kopf M."/>
        </authorList>
    </citation>
    <scope>FUNCTION</scope>
</reference>
<reference key="21">
    <citation type="journal article" date="2017" name="Cell">
        <title>Selenium utilization by GPX4 is required to prevent hydroperoxide-induced ferroptosis.</title>
        <authorList>
            <person name="Ingold I."/>
            <person name="Berndt C."/>
            <person name="Schmitt S."/>
            <person name="Doll S."/>
            <person name="Poschmann G."/>
            <person name="Buday K."/>
            <person name="Roveri A."/>
            <person name="Peng X."/>
            <person name="Porto Freitas F."/>
            <person name="Seibt T."/>
            <person name="Mehr L."/>
            <person name="Aichler M."/>
            <person name="Walch A."/>
            <person name="Lamp D."/>
            <person name="Jastroch M."/>
            <person name="Miyamoto S."/>
            <person name="Wurst W."/>
            <person name="Ursini F."/>
            <person name="Arner E.S.J."/>
            <person name="Fradejas-Villar N."/>
            <person name="Schweizer U."/>
            <person name="Zischka H."/>
            <person name="Friedmann Angeli J.P."/>
            <person name="Conrad M."/>
        </authorList>
    </citation>
    <scope>FUNCTION</scope>
    <scope>CATALYTIC ACTIVITY</scope>
    <scope>SELENOCYSTEINE</scope>
    <scope>ACTIVE SITE</scope>
    <scope>REACTION MECHANISM</scope>
    <scope>MUTAGENESIS OF SEC-73</scope>
</reference>
<reference key="22">
    <citation type="journal article" date="2017" name="Curr. Top. Microbiol. Immunol.">
        <title>Lipid Peroxidation-Dependent Cell Death Regulated by GPx4 and Ferroptosis.</title>
        <authorList>
            <person name="Imai H."/>
            <person name="Matsuoka M."/>
            <person name="Kumagai T."/>
            <person name="Sakamoto T."/>
            <person name="Koumura T."/>
        </authorList>
    </citation>
    <scope>REVIEW</scope>
</reference>
<reference evidence="29" key="23">
    <citation type="journal article" date="2016" name="Acta Crystallogr. F">
        <title>Crystal and solution structural studies of mouse phospholipid hydroperoxide glutathione peroxidase 4.</title>
        <authorList>
            <person name="Janowski R."/>
            <person name="Scanu S."/>
            <person name="Niessing D."/>
            <person name="Madl T."/>
        </authorList>
    </citation>
    <scope>X-RAY CRYSTALLOGRAPHY (1.80 ANGSTROMS) OF 29-197 OF MUTANT CYS-73 (ISOFORM CYTOPLASMIC)</scope>
</reference>
<organism>
    <name type="scientific">Mus musculus</name>
    <name type="common">Mouse</name>
    <dbReference type="NCBI Taxonomy" id="10090"/>
    <lineage>
        <taxon>Eukaryota</taxon>
        <taxon>Metazoa</taxon>
        <taxon>Chordata</taxon>
        <taxon>Craniata</taxon>
        <taxon>Vertebrata</taxon>
        <taxon>Euteleostomi</taxon>
        <taxon>Mammalia</taxon>
        <taxon>Eutheria</taxon>
        <taxon>Euarchontoglires</taxon>
        <taxon>Glires</taxon>
        <taxon>Rodentia</taxon>
        <taxon>Myomorpha</taxon>
        <taxon>Muroidea</taxon>
        <taxon>Muridae</taxon>
        <taxon>Murinae</taxon>
        <taxon>Mus</taxon>
        <taxon>Mus</taxon>
    </lineage>
</organism>
<evidence type="ECO:0000250" key="1">
    <source>
        <dbReference type="UniProtKB" id="P36968"/>
    </source>
</evidence>
<evidence type="ECO:0000250" key="2">
    <source>
        <dbReference type="UniProtKB" id="P36969"/>
    </source>
</evidence>
<evidence type="ECO:0000250" key="3">
    <source>
        <dbReference type="UniProtKB" id="P36970"/>
    </source>
</evidence>
<evidence type="ECO:0000255" key="4"/>
<evidence type="ECO:0000269" key="5">
    <source>
    </source>
</evidence>
<evidence type="ECO:0000269" key="6">
    <source>
    </source>
</evidence>
<evidence type="ECO:0000269" key="7">
    <source>
    </source>
</evidence>
<evidence type="ECO:0000269" key="8">
    <source>
    </source>
</evidence>
<evidence type="ECO:0000269" key="9">
    <source>
    </source>
</evidence>
<evidence type="ECO:0000269" key="10">
    <source>
    </source>
</evidence>
<evidence type="ECO:0000269" key="11">
    <source>
    </source>
</evidence>
<evidence type="ECO:0000269" key="12">
    <source>
    </source>
</evidence>
<evidence type="ECO:0000269" key="13">
    <source>
    </source>
</evidence>
<evidence type="ECO:0000269" key="14">
    <source>
    </source>
</evidence>
<evidence type="ECO:0000269" key="15">
    <source>
    </source>
</evidence>
<evidence type="ECO:0000269" key="16">
    <source>
    </source>
</evidence>
<evidence type="ECO:0000269" key="17">
    <source>
    </source>
</evidence>
<evidence type="ECO:0000269" key="18">
    <source>
    </source>
</evidence>
<evidence type="ECO:0000269" key="19">
    <source>
    </source>
</evidence>
<evidence type="ECO:0000269" key="20">
    <source>
    </source>
</evidence>
<evidence type="ECO:0000303" key="21">
    <source>
    </source>
</evidence>
<evidence type="ECO:0000303" key="22">
    <source>
    </source>
</evidence>
<evidence type="ECO:0000303" key="23">
    <source>
    </source>
</evidence>
<evidence type="ECO:0000303" key="24">
    <source>
    </source>
</evidence>
<evidence type="ECO:0000305" key="25"/>
<evidence type="ECO:0000305" key="26">
    <source>
    </source>
</evidence>
<evidence type="ECO:0000305" key="27">
    <source>
    </source>
</evidence>
<evidence type="ECO:0000312" key="28">
    <source>
        <dbReference type="MGI" id="MGI:104767"/>
    </source>
</evidence>
<evidence type="ECO:0007744" key="29">
    <source>
        <dbReference type="PDB" id="5L71"/>
    </source>
</evidence>
<evidence type="ECO:0007829" key="30">
    <source>
        <dbReference type="PDB" id="5L71"/>
    </source>
</evidence>
<sequence length="197" mass="22229">MSWGRLSRLLKPALLCGALAAPGLAGTMCASRDDWRCARSMHEFSAKDIDGHMVCLDKYRGFVCIVTNVASQUGKTDVNYTQLVDLHARYAECGLRILAFPCNQFGRQEPGSNQEIKEFAAGYNVKFDMYSKICVNGDDAHPLWKWMKVQPKGRGMLGNAIKWNFTKFLIDKNGCVVKRYGPMEEPQVIEKDLPCYL</sequence>
<proteinExistence type="evidence at protein level"/>
<comment type="function">
    <text evidence="1 2 6 10 12 14 15 17 18 19 20">Essential antioxidant peroxidase that directly reduces phospholipid hydroperoxide even if they are incorporated in membranes and lipoproteins (PubMed:29290465). Can also reduce fatty acid hydroperoxide, cholesterol hydroperoxide and thymine hydroperoxide (By similarity). Plays a key role in protecting cells from oxidative damage by preventing membrane lipid peroxidation (PubMed:12566075). Required to prevent cells from ferroptosis, a non-apoptotic cell death resulting from an iron-dependent accumulation of lipid reactive oxygen species (PubMed:12566075, PubMed:24439385, PubMed:25402683, PubMed:25922076, PubMed:29290465). The presence of selenocysteine (Sec) versus Cys at the active site is essential for life: it provides resistance to overoxidation and prevents cells against ferroptosis (PubMed:29290465). The presence of Sec at the active site is also essential for the survival of a specific type of parvalbumin-positive interneurons, thereby preventing against fatal epileptic seizures (PubMed:29290465). May be required to protect cells from the toxicity of ingested lipid hydroperoxides (PubMed:12566075). Required for normal sperm development and male fertility (PubMed:19783653, PubMed:25922076). Essential for maturation and survival of photoreceptor cells (PubMed:22207760). Plays a role in a primary T-cell response to viral and parasitic infection by protecting T-cells from ferroptosis and by supporting T-cell expansion (PubMed:25824823). Plays a role of glutathione peroxidase in platelets in the arachidonic acid metabolism (By similarity). Reduces hydroperoxy ester lipids formed by a 15-lipoxygenase that may play a role as down-regulator of the cellular 15-lipoxygenase pathway (By similarity). Can also reduce small soluble hydroperoxides such as H2O2 and tert-butyl hydroperoxide (PubMed:12566075).</text>
</comment>
<comment type="function">
    <molecule>Isoform Cytoplasmic</molecule>
    <text evidence="3">Specifically able to suppress the production of leukotriene and prostaglandin in response to several stimuli by reducing fatty acid hydroperoxide.</text>
</comment>
<comment type="function">
    <molecule>Isoform Mitochondrial</molecule>
    <text evidence="3 11">Specifically required to prevent mitochondrial cell death by mediating reduction of cardiolipin hydroperoxide (By similarity). Also required for normal sperm development and male fertility (PubMed:19417079).</text>
</comment>
<comment type="function">
    <molecule>Isoform Nuclear</molecule>
    <text evidence="6">Required for male fertility by stabilizing the condensed chromatin in sperm nuclei (PubMed:12566075).</text>
</comment>
<comment type="catalytic activity">
    <reaction evidence="20">
        <text>a hydroperoxy polyunsaturated fatty acid + 2 glutathione = a hydroxy polyunsaturated fatty acid + glutathione disulfide + H2O</text>
        <dbReference type="Rhea" id="RHEA:19057"/>
        <dbReference type="ChEBI" id="CHEBI:15377"/>
        <dbReference type="ChEBI" id="CHEBI:57925"/>
        <dbReference type="ChEBI" id="CHEBI:58297"/>
        <dbReference type="ChEBI" id="CHEBI:131871"/>
        <dbReference type="ChEBI" id="CHEBI:134019"/>
        <dbReference type="EC" id="1.11.1.12"/>
    </reaction>
    <physiologicalReaction direction="left-to-right" evidence="25">
        <dbReference type="Rhea" id="RHEA:19058"/>
    </physiologicalReaction>
</comment>
<comment type="catalytic activity">
    <reaction evidence="6">
        <text>2 glutathione + H2O2 = glutathione disulfide + 2 H2O</text>
        <dbReference type="Rhea" id="RHEA:16833"/>
        <dbReference type="ChEBI" id="CHEBI:15377"/>
        <dbReference type="ChEBI" id="CHEBI:16240"/>
        <dbReference type="ChEBI" id="CHEBI:57925"/>
        <dbReference type="ChEBI" id="CHEBI:58297"/>
        <dbReference type="EC" id="1.11.1.9"/>
    </reaction>
    <physiologicalReaction direction="left-to-right" evidence="26">
        <dbReference type="Rhea" id="RHEA:16834"/>
    </physiologicalReaction>
</comment>
<comment type="catalytic activity">
    <reaction evidence="6">
        <text>tert-butyl hydroperoxide + 2 glutathione = tert-butanol + glutathione disulfide + H2O</text>
        <dbReference type="Rhea" id="RHEA:69412"/>
        <dbReference type="ChEBI" id="CHEBI:15377"/>
        <dbReference type="ChEBI" id="CHEBI:45895"/>
        <dbReference type="ChEBI" id="CHEBI:57925"/>
        <dbReference type="ChEBI" id="CHEBI:58297"/>
        <dbReference type="ChEBI" id="CHEBI:64090"/>
    </reaction>
    <physiologicalReaction direction="left-to-right" evidence="26">
        <dbReference type="Rhea" id="RHEA:69413"/>
    </physiologicalReaction>
</comment>
<comment type="catalytic activity">
    <reaction evidence="2">
        <text>cumene hydroperoxide + 2 glutathione = 2-phenylpropan-2-ol + glutathione disulfide + H2O</text>
        <dbReference type="Rhea" id="RHEA:69651"/>
        <dbReference type="ChEBI" id="CHEBI:15377"/>
        <dbReference type="ChEBI" id="CHEBI:57925"/>
        <dbReference type="ChEBI" id="CHEBI:58297"/>
        <dbReference type="ChEBI" id="CHEBI:78673"/>
        <dbReference type="ChEBI" id="CHEBI:131607"/>
    </reaction>
    <physiologicalReaction direction="left-to-right" evidence="2">
        <dbReference type="Rhea" id="RHEA:69652"/>
    </physiologicalReaction>
</comment>
<comment type="catalytic activity">
    <reaction evidence="2">
        <text>(9S)-hydroperoxy-(10E,12Z)-octadecadienoate + 2 glutathione = (9S)-hydroxy-(10E,12Z)-octadecadienoate + glutathione disulfide + H2O</text>
        <dbReference type="Rhea" id="RHEA:76687"/>
        <dbReference type="ChEBI" id="CHEBI:15377"/>
        <dbReference type="ChEBI" id="CHEBI:57925"/>
        <dbReference type="ChEBI" id="CHEBI:58297"/>
        <dbReference type="ChEBI" id="CHEBI:60955"/>
        <dbReference type="ChEBI" id="CHEBI:77852"/>
    </reaction>
    <physiologicalReaction direction="left-to-right" evidence="2">
        <dbReference type="Rhea" id="RHEA:76688"/>
    </physiologicalReaction>
</comment>
<comment type="catalytic activity">
    <reaction evidence="2">
        <text>(13S)-hydroperoxy-(9Z,11E)-octadecadienoate + 2 glutathione = (13S)-hydroxy-(9Z,11E)-octadecadienoate + glutathione disulfide + H2O</text>
        <dbReference type="Rhea" id="RHEA:48888"/>
        <dbReference type="ChEBI" id="CHEBI:15377"/>
        <dbReference type="ChEBI" id="CHEBI:57466"/>
        <dbReference type="ChEBI" id="CHEBI:57925"/>
        <dbReference type="ChEBI" id="CHEBI:58297"/>
        <dbReference type="ChEBI" id="CHEBI:90850"/>
    </reaction>
    <physiologicalReaction direction="left-to-right" evidence="2">
        <dbReference type="Rhea" id="RHEA:48889"/>
    </physiologicalReaction>
</comment>
<comment type="catalytic activity">
    <reaction evidence="2">
        <text>(5S)-hydroperoxy-(6E,8Z,11Z,14Z)-eicosatetraenoate + 2 glutathione = (5S)-hydroxy-(6E,8Z,11Z,14Z)-eicosatetraenoate + glutathione disulfide + H2O</text>
        <dbReference type="Rhea" id="RHEA:48620"/>
        <dbReference type="ChEBI" id="CHEBI:15377"/>
        <dbReference type="ChEBI" id="CHEBI:57450"/>
        <dbReference type="ChEBI" id="CHEBI:57925"/>
        <dbReference type="ChEBI" id="CHEBI:58297"/>
        <dbReference type="ChEBI" id="CHEBI:90632"/>
    </reaction>
    <physiologicalReaction direction="left-to-right" evidence="2">
        <dbReference type="Rhea" id="RHEA:48621"/>
    </physiologicalReaction>
</comment>
<comment type="catalytic activity">
    <reaction evidence="2">
        <text>(12R)-hydroperoxy-(5Z,8Z,10E,14Z)-eicosatetraenoate + 2 glutathione = (12R)-hydroxy-(5Z,8Z,10E,14Z)-eicosatetraenoate + glutathione disulfide + H2O</text>
        <dbReference type="Rhea" id="RHEA:76691"/>
        <dbReference type="ChEBI" id="CHEBI:15377"/>
        <dbReference type="ChEBI" id="CHEBI:57925"/>
        <dbReference type="ChEBI" id="CHEBI:58297"/>
        <dbReference type="ChEBI" id="CHEBI:75230"/>
        <dbReference type="ChEBI" id="CHEBI:83343"/>
    </reaction>
    <physiologicalReaction direction="left-to-right" evidence="2">
        <dbReference type="Rhea" id="RHEA:76692"/>
    </physiologicalReaction>
</comment>
<comment type="catalytic activity">
    <reaction evidence="2">
        <text>(12S)-hydroperoxy-(5Z,8Z,10E,14Z)-eicosatetraenoate + 2 glutathione = (12S)-hydroxy-(5Z,8Z,10E,14Z)-eicosatetraenoate + glutathione disulfide + H2O</text>
        <dbReference type="Rhea" id="RHEA:50708"/>
        <dbReference type="ChEBI" id="CHEBI:15377"/>
        <dbReference type="ChEBI" id="CHEBI:57444"/>
        <dbReference type="ChEBI" id="CHEBI:57925"/>
        <dbReference type="ChEBI" id="CHEBI:58297"/>
        <dbReference type="ChEBI" id="CHEBI:90680"/>
    </reaction>
    <physiologicalReaction direction="left-to-right" evidence="2">
        <dbReference type="Rhea" id="RHEA:50709"/>
    </physiologicalReaction>
</comment>
<comment type="catalytic activity">
    <reaction evidence="2">
        <text>(15S)-hydroperoxy-(5Z,8Z,11Z,13E)-eicosatetraenoate + 2 glutathione = (15S)-hydroxy-(5Z,8Z,11Z,13E)-eicosatetraenoate + glutathione disulfide + H2O</text>
        <dbReference type="Rhea" id="RHEA:76695"/>
        <dbReference type="ChEBI" id="CHEBI:15377"/>
        <dbReference type="ChEBI" id="CHEBI:57409"/>
        <dbReference type="ChEBI" id="CHEBI:57446"/>
        <dbReference type="ChEBI" id="CHEBI:57925"/>
        <dbReference type="ChEBI" id="CHEBI:58297"/>
    </reaction>
    <physiologicalReaction direction="left-to-right" evidence="2">
        <dbReference type="Rhea" id="RHEA:76696"/>
    </physiologicalReaction>
</comment>
<comment type="catalytic activity">
    <reaction evidence="2">
        <text>(5S)-hydroperoxy-(6E,8Z,11Z,14Z,17Z)-eicosapentaenoate + 2 glutathione = (5S)-hydroxy-(6E,8Z,11Z,14Z,17Z)-eicosapentaenoate + glutathione disulfide + H2O</text>
        <dbReference type="Rhea" id="RHEA:76699"/>
        <dbReference type="ChEBI" id="CHEBI:15377"/>
        <dbReference type="ChEBI" id="CHEBI:57925"/>
        <dbReference type="ChEBI" id="CHEBI:58297"/>
        <dbReference type="ChEBI" id="CHEBI:195399"/>
        <dbReference type="ChEBI" id="CHEBI:195400"/>
    </reaction>
    <physiologicalReaction direction="left-to-right" evidence="2">
        <dbReference type="Rhea" id="RHEA:76700"/>
    </physiologicalReaction>
</comment>
<comment type="catalytic activity">
    <reaction evidence="2">
        <text>(12S)-hydroperoxy-(5Z,8Z,10E,14Z,17Z)-eicosapentaenoate + 2 glutathione = (12S)-hydroxy-(5Z,8Z,10E,14Z,17Z)-eicosapentaenoate + glutathione disulfide + H2O</text>
        <dbReference type="Rhea" id="RHEA:76703"/>
        <dbReference type="ChEBI" id="CHEBI:15377"/>
        <dbReference type="ChEBI" id="CHEBI:57925"/>
        <dbReference type="ChEBI" id="CHEBI:58297"/>
        <dbReference type="ChEBI" id="CHEBI:90772"/>
        <dbReference type="ChEBI" id="CHEBI:195401"/>
    </reaction>
    <physiologicalReaction direction="left-to-right" evidence="2">
        <dbReference type="Rhea" id="RHEA:76704"/>
    </physiologicalReaction>
</comment>
<comment type="catalytic activity">
    <reaction evidence="2">
        <text>(15S)-hydroperoxy-(5Z,8Z,11Z,13E,17Z)-eicosapentaenoate + 2 glutathione = (15S)-hydroxy-(5Z,8Z,11Z,13E,17Z)-eicosapentaenoate + glutathione disulfide + H2O</text>
        <dbReference type="Rhea" id="RHEA:76707"/>
        <dbReference type="ChEBI" id="CHEBI:15377"/>
        <dbReference type="ChEBI" id="CHEBI:57925"/>
        <dbReference type="ChEBI" id="CHEBI:58297"/>
        <dbReference type="ChEBI" id="CHEBI:132087"/>
        <dbReference type="ChEBI" id="CHEBI:194369"/>
    </reaction>
    <physiologicalReaction direction="left-to-right" evidence="2">
        <dbReference type="Rhea" id="RHEA:76708"/>
    </physiologicalReaction>
</comment>
<comment type="catalytic activity">
    <reaction evidence="2">
        <text>(15S)-hydroperoxy-(11Z,13E)-eicosadienoate + 2 glutathione = (15S)-hydroxy-(11Z,13E)-eicosadienoate + glutathione disulfide + H2O</text>
        <dbReference type="Rhea" id="RHEA:76711"/>
        <dbReference type="ChEBI" id="CHEBI:15377"/>
        <dbReference type="ChEBI" id="CHEBI:57925"/>
        <dbReference type="ChEBI" id="CHEBI:58297"/>
        <dbReference type="ChEBI" id="CHEBI:144832"/>
        <dbReference type="ChEBI" id="CHEBI:195402"/>
    </reaction>
    <physiologicalReaction direction="left-to-right" evidence="2">
        <dbReference type="Rhea" id="RHEA:76712"/>
    </physiologicalReaction>
</comment>
<comment type="catalytic activity">
    <reaction evidence="2">
        <text>(17S)-hydroperoxy-(4Z,7Z,10Z,13Z,15E,19Z)-docosahexaenoate + 2 glutathione = (17S)-hydroxy-(4Z,7Z,10Z,13Z,15E,19Z)-docosahexaenoate + glutathione disulfide + H2O</text>
        <dbReference type="Rhea" id="RHEA:76715"/>
        <dbReference type="ChEBI" id="CHEBI:15377"/>
        <dbReference type="ChEBI" id="CHEBI:57925"/>
        <dbReference type="ChEBI" id="CHEBI:58297"/>
        <dbReference type="ChEBI" id="CHEBI:133795"/>
        <dbReference type="ChEBI" id="CHEBI:195403"/>
    </reaction>
    <physiologicalReaction direction="left-to-right" evidence="2">
        <dbReference type="Rhea" id="RHEA:76716"/>
    </physiologicalReaction>
</comment>
<comment type="catalytic activity">
    <reaction evidence="19">
        <text>a hydroperoxy-1,2-diacyl-glycero-3-phosphocholine + 2 glutathione = a hydroxy-1,2-diacyl-glycero-3-phosphocholine + glutathione disulfide + H2O</text>
        <dbReference type="Rhea" id="RHEA:76731"/>
        <dbReference type="ChEBI" id="CHEBI:15377"/>
        <dbReference type="ChEBI" id="CHEBI:57925"/>
        <dbReference type="ChEBI" id="CHEBI:58297"/>
        <dbReference type="ChEBI" id="CHEBI:195423"/>
        <dbReference type="ChEBI" id="CHEBI:195424"/>
    </reaction>
    <physiologicalReaction direction="left-to-right" evidence="27">
        <dbReference type="Rhea" id="RHEA:76732"/>
    </physiologicalReaction>
</comment>
<comment type="subunit">
    <text evidence="2">Monomer. Has a tendency to form higher mass oligomers. Interacts with FUNDC1; this interaction promotes GPX4 recruitment into mitochondria through TOM/TIM complex where it is degraded by mitophagy.</text>
</comment>
<comment type="subcellular location">
    <molecule>Isoform Mitochondrial</molecule>
    <subcellularLocation>
        <location evidence="6 14">Mitochondrion</location>
    </subcellularLocation>
</comment>
<comment type="subcellular location">
    <molecule>Isoform Cytoplasmic</molecule>
    <subcellularLocation>
        <location evidence="6">Cytoplasm</location>
    </subcellularLocation>
</comment>
<comment type="subcellular location">
    <molecule>Isoform Nuclear</molecule>
    <subcellularLocation>
        <location evidence="5">Nucleus</location>
    </subcellularLocation>
</comment>
<comment type="alternative products">
    <event type="alternative splicing"/>
    <event type="alternative initiation"/>
    <isoform>
        <id>O70325-1</id>
        <name>Mitochondrial</name>
        <name evidence="23">mGPx4</name>
        <sequence type="displayed"/>
    </isoform>
    <isoform>
        <id>O70325-2</id>
        <name>Cytoplasmic</name>
        <name evidence="23">cGPx4</name>
        <sequence type="described" ref="VSP_018743"/>
    </isoform>
    <isoform>
        <id>O70325-3</id>
        <name>Nuclear</name>
        <name evidence="23">nGPx4</name>
        <sequence type="described" ref="VSP_059349"/>
    </isoform>
</comment>
<comment type="tissue specificity">
    <text evidence="5 6 9 11 14">Widely expressed with the highest levels in testis, heart, cerebrum, ileum, stomach, liver, jejunum and epididymis (PubMed:17503194). Expressed primarily in testis and sperm midpiece (at protein level) (PubMed:12566075, PubMed:19417079). Expressed in brain (at protein level) (PubMed:12566075, PubMed:22207760). Expressed in heart, liver and kidney (at protein level) (PubMed:12566075). Expressed in retina, especially in inner segments of photoreceptor cells (at protein level) (PubMed:22207760).</text>
</comment>
<comment type="tissue specificity">
    <molecule>Isoform Mitochondrial</molecule>
    <text evidence="8">Highly expressed during embryogenesis (PubMed:1668477). Down-regulated between 14.5 dpc and 17.5 dpc (PubMed:1668477).</text>
</comment>
<comment type="tissue specificity">
    <molecule>Isoform Cytoplasmic</molecule>
    <text evidence="8">Highly expressed during embryogenesis (PubMed:1668477). In contrast to isoform Mitochondrial and isoform Nuclear, which are down-regulated between 14.5 dpc and 17.5 dpc, remains constant (PubMed:1668477).</text>
</comment>
<comment type="tissue specificity">
    <molecule>Isoform Nuclear</molecule>
    <text evidence="5 8">Mainly expressed in sperm (PubMed:11344099). Weakly expressed during embryogenesis (PubMed:1668477). Down-regulated between 14.5 dpc and 17.5 dpc (PubMed:1668477).</text>
</comment>
<comment type="disruption phenotype">
    <text evidence="7 10 12 13 14 16 17">Embryonic lethality in utero at midgestation, caused by inability to initiate gastrulation and the absence of embryonic cavities (PubMed:12745070). Conditional knockout mice lacking Gpx4 in spermatocytes causes sperm abnormalities and male infertility (PubMed:19783653). Conditional knockout mice lacking Gpx4 in photoreceptor cells causes retinal degeneration, decreased mitochondrial biomass and decreased number of connecting cilia in these cells (PubMed:22207760). Mice display neurodegeneration (PubMed:18762024). Conditional knockout mice lacking Gpx4 in neurons show reduced parvalbumin-positive interneurons and develop phenotypes, such as cerebellar hypoplasia and seizures (PubMed:19890015, PubMed:24599700). Induced disruption of Gpx4 in mice causes acute renal failure and early death due to ferroptosis (PubMed:25402683).</text>
</comment>
<comment type="disruption phenotype">
    <molecule>Isoform Mitochondrial</molecule>
    <text evidence="11">Isoform mitochondrial: Selective disruption of isoform mitochondrial causes sperm abnormalities and male infertility (PubMed:19417079).</text>
</comment>
<comment type="miscellaneous">
    <text evidence="20">The presence of selenolate in the active site is essential for resistance to overoxidation: in the absence of reducing equivalents, the enzyme can form a selenylamide intermediate during its catalytic cycle, thereby preventing its irreversible overoxidation.</text>
</comment>
<comment type="miscellaneous">
    <molecule>Isoform Cytoplasmic</molecule>
    <text evidence="25">Produced by alternative initiation at Met-28 of isoform Mitochondrial.</text>
</comment>
<comment type="similarity">
    <text evidence="25">Belongs to the glutathione peroxidase family.</text>
</comment>
<comment type="online information" name="Protein Spotlight">
    <link uri="https://www.proteinspotlight.org/back_issues/205/"/>
    <text>Life, a subtle balance - Issue 205 of July 2018</text>
</comment>
<gene>
    <name evidence="22 28" type="primary">Gpx4</name>
</gene>
<name>GPX4_MOUSE</name>